<reference key="1">
    <citation type="journal article" date="2008" name="J. Bacteriol.">
        <title>The complete genome sequence of Escherichia coli DH10B: insights into the biology of a laboratory workhorse.</title>
        <authorList>
            <person name="Durfee T."/>
            <person name="Nelson R."/>
            <person name="Baldwin S."/>
            <person name="Plunkett G. III"/>
            <person name="Burland V."/>
            <person name="Mau B."/>
            <person name="Petrosino J.F."/>
            <person name="Qin X."/>
            <person name="Muzny D.M."/>
            <person name="Ayele M."/>
            <person name="Gibbs R.A."/>
            <person name="Csorgo B."/>
            <person name="Posfai G."/>
            <person name="Weinstock G.M."/>
            <person name="Blattner F.R."/>
        </authorList>
    </citation>
    <scope>NUCLEOTIDE SEQUENCE [LARGE SCALE GENOMIC DNA]</scope>
    <source>
        <strain>K12 / DH10B</strain>
    </source>
</reference>
<name>MINE_ECODH</name>
<organism>
    <name type="scientific">Escherichia coli (strain K12 / DH10B)</name>
    <dbReference type="NCBI Taxonomy" id="316385"/>
    <lineage>
        <taxon>Bacteria</taxon>
        <taxon>Pseudomonadati</taxon>
        <taxon>Pseudomonadota</taxon>
        <taxon>Gammaproteobacteria</taxon>
        <taxon>Enterobacterales</taxon>
        <taxon>Enterobacteriaceae</taxon>
        <taxon>Escherichia</taxon>
    </lineage>
</organism>
<accession>B1XA61</accession>
<comment type="function">
    <text evidence="1">Prevents the cell division inhibition by proteins MinC and MinD at internal division sites while permitting inhibition at polar sites. This ensures cell division at the proper site by restricting the formation of a division septum at the midpoint of the long axis of the cell.</text>
</comment>
<comment type="similarity">
    <text evidence="1">Belongs to the MinE family.</text>
</comment>
<sequence length="88" mass="10235">MALLDFFLSRKKNTANIAKERLQIIVAERRRSDAEPHYLPQLRKDILEVICKYVQIDPEMVTVQLEQKDGDISILELNVTLPEAEELK</sequence>
<proteinExistence type="inferred from homology"/>
<keyword id="KW-0131">Cell cycle</keyword>
<keyword id="KW-0132">Cell division</keyword>
<dbReference type="EMBL" id="CP000948">
    <property type="protein sequence ID" value="ACB02344.1"/>
    <property type="molecule type" value="Genomic_DNA"/>
</dbReference>
<dbReference type="RefSeq" id="WP_001185665.1">
    <property type="nucleotide sequence ID" value="NC_010473.1"/>
</dbReference>
<dbReference type="SMR" id="B1XA61"/>
<dbReference type="GeneID" id="93776260"/>
<dbReference type="KEGG" id="ecd:ECDH10B_1227"/>
<dbReference type="HOGENOM" id="CLU_137929_2_2_6"/>
<dbReference type="GO" id="GO:0051301">
    <property type="term" value="P:cell division"/>
    <property type="evidence" value="ECO:0007669"/>
    <property type="project" value="UniProtKB-KW"/>
</dbReference>
<dbReference type="GO" id="GO:0032955">
    <property type="term" value="P:regulation of division septum assembly"/>
    <property type="evidence" value="ECO:0007669"/>
    <property type="project" value="InterPro"/>
</dbReference>
<dbReference type="FunFam" id="3.30.1070.10:FF:000001">
    <property type="entry name" value="Cell division topological specificity factor"/>
    <property type="match status" value="1"/>
</dbReference>
<dbReference type="Gene3D" id="3.30.1070.10">
    <property type="entry name" value="Cell division topological specificity factor MinE"/>
    <property type="match status" value="1"/>
</dbReference>
<dbReference type="HAMAP" id="MF_00262">
    <property type="entry name" value="MinE"/>
    <property type="match status" value="1"/>
</dbReference>
<dbReference type="InterPro" id="IPR005527">
    <property type="entry name" value="MinE"/>
</dbReference>
<dbReference type="InterPro" id="IPR036707">
    <property type="entry name" value="MinE_sf"/>
</dbReference>
<dbReference type="NCBIfam" id="TIGR01215">
    <property type="entry name" value="minE"/>
    <property type="match status" value="1"/>
</dbReference>
<dbReference type="NCBIfam" id="NF001422">
    <property type="entry name" value="PRK00296.1"/>
    <property type="match status" value="1"/>
</dbReference>
<dbReference type="Pfam" id="PF03776">
    <property type="entry name" value="MinE"/>
    <property type="match status" value="1"/>
</dbReference>
<dbReference type="SUPFAM" id="SSF55229">
    <property type="entry name" value="Cell division protein MinE topological specificity domain"/>
    <property type="match status" value="1"/>
</dbReference>
<evidence type="ECO:0000255" key="1">
    <source>
        <dbReference type="HAMAP-Rule" id="MF_00262"/>
    </source>
</evidence>
<feature type="chain" id="PRO_1000114219" description="Cell division topological specificity factor">
    <location>
        <begin position="1"/>
        <end position="88"/>
    </location>
</feature>
<protein>
    <recommendedName>
        <fullName evidence="1">Cell division topological specificity factor</fullName>
    </recommendedName>
</protein>
<gene>
    <name evidence="1" type="primary">minE</name>
    <name type="ordered locus">ECDH10B_1227</name>
</gene>